<proteinExistence type="inferred from homology"/>
<evidence type="ECO:0000255" key="1"/>
<evidence type="ECO:0000255" key="2">
    <source>
        <dbReference type="PROSITE-ProRule" id="PRU00544"/>
    </source>
</evidence>
<evidence type="ECO:0000305" key="3"/>
<dbReference type="EMBL" id="AE015928">
    <property type="protein sequence ID" value="AAO75607.1"/>
    <property type="molecule type" value="Genomic_DNA"/>
</dbReference>
<dbReference type="RefSeq" id="NP_809413.1">
    <property type="nucleotide sequence ID" value="NC_004663.1"/>
</dbReference>
<dbReference type="RefSeq" id="WP_008765024.1">
    <property type="nucleotide sequence ID" value="NC_004663.1"/>
</dbReference>
<dbReference type="SMR" id="Q8AAG5"/>
<dbReference type="STRING" id="226186.BT_0500"/>
<dbReference type="PaxDb" id="226186-BT_0500"/>
<dbReference type="EnsemblBacteria" id="AAO75607">
    <property type="protein sequence ID" value="AAO75607"/>
    <property type="gene ID" value="BT_0500"/>
</dbReference>
<dbReference type="GeneID" id="60926459"/>
<dbReference type="KEGG" id="bth:BT_0500"/>
<dbReference type="PATRIC" id="fig|226186.12.peg.501"/>
<dbReference type="eggNOG" id="COG0490">
    <property type="taxonomic scope" value="Bacteria"/>
</dbReference>
<dbReference type="eggNOG" id="COG2985">
    <property type="taxonomic scope" value="Bacteria"/>
</dbReference>
<dbReference type="HOGENOM" id="CLU_035023_3_0_10"/>
<dbReference type="InParanoid" id="Q8AAG5"/>
<dbReference type="OrthoDB" id="9155749at2"/>
<dbReference type="Proteomes" id="UP000001414">
    <property type="component" value="Chromosome"/>
</dbReference>
<dbReference type="GO" id="GO:0005886">
    <property type="term" value="C:plasma membrane"/>
    <property type="evidence" value="ECO:0000318"/>
    <property type="project" value="GO_Central"/>
</dbReference>
<dbReference type="GO" id="GO:0008324">
    <property type="term" value="F:monoatomic cation transmembrane transporter activity"/>
    <property type="evidence" value="ECO:0007669"/>
    <property type="project" value="InterPro"/>
</dbReference>
<dbReference type="GO" id="GO:0006813">
    <property type="term" value="P:potassium ion transport"/>
    <property type="evidence" value="ECO:0007669"/>
    <property type="project" value="InterPro"/>
</dbReference>
<dbReference type="Gene3D" id="3.30.70.1450">
    <property type="entry name" value="Regulator of K+ conductance, C-terminal domain"/>
    <property type="match status" value="2"/>
</dbReference>
<dbReference type="InterPro" id="IPR050144">
    <property type="entry name" value="AAE_transporter"/>
</dbReference>
<dbReference type="InterPro" id="IPR006037">
    <property type="entry name" value="RCK_C"/>
</dbReference>
<dbReference type="InterPro" id="IPR036721">
    <property type="entry name" value="RCK_C_sf"/>
</dbReference>
<dbReference type="InterPro" id="IPR006512">
    <property type="entry name" value="YidE_YbjL"/>
</dbReference>
<dbReference type="NCBIfam" id="TIGR01625">
    <property type="entry name" value="YidE_YbjL_dupl"/>
    <property type="match status" value="2"/>
</dbReference>
<dbReference type="PANTHER" id="PTHR30445">
    <property type="entry name" value="K(+)_H(+) ANTIPORTER SUBUNIT KHTT"/>
    <property type="match status" value="1"/>
</dbReference>
<dbReference type="PANTHER" id="PTHR30445:SF3">
    <property type="entry name" value="TRANSPORT PROTEIN YIDE-RELATED"/>
    <property type="match status" value="1"/>
</dbReference>
<dbReference type="Pfam" id="PF06826">
    <property type="entry name" value="Asp-Al_Ex"/>
    <property type="match status" value="2"/>
</dbReference>
<dbReference type="Pfam" id="PF02080">
    <property type="entry name" value="TrkA_C"/>
    <property type="match status" value="2"/>
</dbReference>
<dbReference type="SUPFAM" id="SSF116726">
    <property type="entry name" value="TrkA C-terminal domain-like"/>
    <property type="match status" value="2"/>
</dbReference>
<dbReference type="PROSITE" id="PS51202">
    <property type="entry name" value="RCK_C"/>
    <property type="match status" value="2"/>
</dbReference>
<organism>
    <name type="scientific">Bacteroides thetaiotaomicron (strain ATCC 29148 / DSM 2079 / JCM 5827 / CCUG 10774 / NCTC 10582 / VPI-5482 / E50)</name>
    <dbReference type="NCBI Taxonomy" id="226186"/>
    <lineage>
        <taxon>Bacteria</taxon>
        <taxon>Pseudomonadati</taxon>
        <taxon>Bacteroidota</taxon>
        <taxon>Bacteroidia</taxon>
        <taxon>Bacteroidales</taxon>
        <taxon>Bacteroidaceae</taxon>
        <taxon>Bacteroides</taxon>
    </lineage>
</organism>
<feature type="chain" id="PRO_0000208756" description="Uncharacterized transporter BT_0500">
    <location>
        <begin position="1"/>
        <end position="532"/>
    </location>
</feature>
<feature type="transmembrane region" description="Helical" evidence="1">
    <location>
        <begin position="7"/>
        <end position="26"/>
    </location>
</feature>
<feature type="transmembrane region" description="Helical" evidence="1">
    <location>
        <begin position="30"/>
        <end position="52"/>
    </location>
</feature>
<feature type="transmembrane region" description="Helical" evidence="1">
    <location>
        <begin position="59"/>
        <end position="77"/>
    </location>
</feature>
<feature type="transmembrane region" description="Helical" evidence="1">
    <location>
        <begin position="87"/>
        <end position="109"/>
    </location>
</feature>
<feature type="transmembrane region" description="Helical" evidence="1">
    <location>
        <begin position="116"/>
        <end position="134"/>
    </location>
</feature>
<feature type="transmembrane region" description="Helical" evidence="1">
    <location>
        <begin position="139"/>
        <end position="161"/>
    </location>
</feature>
<feature type="transmembrane region" description="Helical" evidence="1">
    <location>
        <begin position="356"/>
        <end position="376"/>
    </location>
</feature>
<feature type="transmembrane region" description="Helical" evidence="1">
    <location>
        <begin position="386"/>
        <end position="408"/>
    </location>
</feature>
<feature type="transmembrane region" description="Helical" evidence="1">
    <location>
        <begin position="421"/>
        <end position="440"/>
    </location>
</feature>
<feature type="transmembrane region" description="Helical" evidence="1">
    <location>
        <begin position="445"/>
        <end position="467"/>
    </location>
</feature>
<feature type="transmembrane region" description="Helical" evidence="1">
    <location>
        <begin position="474"/>
        <end position="496"/>
    </location>
</feature>
<feature type="transmembrane region" description="Helical" evidence="1">
    <location>
        <begin position="506"/>
        <end position="528"/>
    </location>
</feature>
<feature type="domain" description="RCK C-terminal 1" evidence="2">
    <location>
        <begin position="179"/>
        <end position="262"/>
    </location>
</feature>
<feature type="domain" description="RCK C-terminal 2" evidence="2">
    <location>
        <begin position="263"/>
        <end position="346"/>
    </location>
</feature>
<comment type="subcellular location">
    <subcellularLocation>
        <location evidence="3">Cell membrane</location>
        <topology evidence="3">Multi-pass membrane protein</topology>
    </subcellularLocation>
</comment>
<comment type="similarity">
    <text evidence="3">Belongs to the AAE transporter (TC 2.A.81) family.</text>
</comment>
<sequence length="532" mass="56836">MFTDLLHSSYFSLFLIVALGFMLGRIKIKGLSLDVSAVIFIALLFGHFGVIIPKELGNFGLVLFIFTIGIQAGPGFFDSFRSKGKTLILITMLIICSACLTAVGLKYAFDIDTPSVVGLIAGALTSTPGLAVAIDSTHSPLASIAYGIAYPFGVIGVILFVKLLPKIMRVNLDQEARRLEIERRGQFPELGTCIYRVTNASVFNRSLMQINARAMTGAVISRLKHKDEISIPTAHTVLHEGDYIQAVGSEESLNQLSVLIGEREEGELPLDKTQEIESLLLTKKDMINKQLGDLNLQKNFGCTVTRVRRSGIDLSPSPDLALKFGDKLMVVGEKEGIKGVARLLGNNAKKLSDTDFFPIAMGIVLGVLFGKLNISFSDTLSFSPGLTGGVLMVALVLSAVGKTGPIIWSMSGPANQLLRQLGLLLFLAEVGTSAGKNLVATFQESGLLMFGVGAAITVVPMLVAVIVGRLVFKINILDLLGTITGGMTSTPGLAAADSMVDSNIPSVAYATVYPIAMVFLILFIQVISSAVY</sequence>
<gene>
    <name type="ordered locus">BT_0500</name>
</gene>
<name>Y500_BACTN</name>
<accession>Q8AAG5</accession>
<keyword id="KW-1003">Cell membrane</keyword>
<keyword id="KW-0472">Membrane</keyword>
<keyword id="KW-1185">Reference proteome</keyword>
<keyword id="KW-0677">Repeat</keyword>
<keyword id="KW-0812">Transmembrane</keyword>
<keyword id="KW-1133">Transmembrane helix</keyword>
<keyword id="KW-0813">Transport</keyword>
<protein>
    <recommendedName>
        <fullName>Uncharacterized transporter BT_0500</fullName>
    </recommendedName>
</protein>
<reference key="1">
    <citation type="journal article" date="2003" name="Science">
        <title>A genomic view of the human-Bacteroides thetaiotaomicron symbiosis.</title>
        <authorList>
            <person name="Xu J."/>
            <person name="Bjursell M.K."/>
            <person name="Himrod J."/>
            <person name="Deng S."/>
            <person name="Carmichael L.K."/>
            <person name="Chiang H.C."/>
            <person name="Hooper L.V."/>
            <person name="Gordon J.I."/>
        </authorList>
    </citation>
    <scope>NUCLEOTIDE SEQUENCE [LARGE SCALE GENOMIC DNA]</scope>
    <source>
        <strain>ATCC 29148 / DSM 2079 / JCM 5827 / CCUG 10774 / NCTC 10582 / VPI-5482 / E50</strain>
    </source>
</reference>